<gene>
    <name evidence="1" type="primary">hemC</name>
    <name type="ordered locus">Clim_0893</name>
</gene>
<protein>
    <recommendedName>
        <fullName evidence="1">Porphobilinogen deaminase</fullName>
        <shortName evidence="1">PBG</shortName>
        <ecNumber evidence="1">2.5.1.61</ecNumber>
    </recommendedName>
    <alternativeName>
        <fullName evidence="1">Hydroxymethylbilane synthase</fullName>
        <shortName evidence="1">HMBS</shortName>
    </alternativeName>
    <alternativeName>
        <fullName evidence="1">Pre-uroporphyrinogen synthase</fullName>
    </alternativeName>
</protein>
<organism>
    <name type="scientific">Chlorobium limicola (strain DSM 245 / NBRC 103803 / 6330)</name>
    <dbReference type="NCBI Taxonomy" id="290315"/>
    <lineage>
        <taxon>Bacteria</taxon>
        <taxon>Pseudomonadati</taxon>
        <taxon>Chlorobiota</taxon>
        <taxon>Chlorobiia</taxon>
        <taxon>Chlorobiales</taxon>
        <taxon>Chlorobiaceae</taxon>
        <taxon>Chlorobium/Pelodictyon group</taxon>
        <taxon>Chlorobium</taxon>
    </lineage>
</organism>
<reference key="1">
    <citation type="submission" date="2008-05" db="EMBL/GenBank/DDBJ databases">
        <title>Complete sequence of Chlorobium limicola DSM 245.</title>
        <authorList>
            <consortium name="US DOE Joint Genome Institute"/>
            <person name="Lucas S."/>
            <person name="Copeland A."/>
            <person name="Lapidus A."/>
            <person name="Glavina del Rio T."/>
            <person name="Dalin E."/>
            <person name="Tice H."/>
            <person name="Bruce D."/>
            <person name="Goodwin L."/>
            <person name="Pitluck S."/>
            <person name="Schmutz J."/>
            <person name="Larimer F."/>
            <person name="Land M."/>
            <person name="Hauser L."/>
            <person name="Kyrpides N."/>
            <person name="Ovchinnikova G."/>
            <person name="Zhao F."/>
            <person name="Li T."/>
            <person name="Liu Z."/>
            <person name="Overmann J."/>
            <person name="Bryant D.A."/>
            <person name="Richardson P."/>
        </authorList>
    </citation>
    <scope>NUCLEOTIDE SEQUENCE [LARGE SCALE GENOMIC DNA]</scope>
    <source>
        <strain>DSM 245 / NBRC 103803 / 6330</strain>
    </source>
</reference>
<name>HEM3_CHLL2</name>
<keyword id="KW-0149">Chlorophyll biosynthesis</keyword>
<keyword id="KW-0627">Porphyrin biosynthesis</keyword>
<keyword id="KW-0808">Transferase</keyword>
<feature type="chain" id="PRO_1000114141" description="Porphobilinogen deaminase">
    <location>
        <begin position="1"/>
        <end position="313"/>
    </location>
</feature>
<feature type="modified residue" description="S-(dipyrrolylmethanemethyl)cysteine" evidence="1">
    <location>
        <position position="241"/>
    </location>
</feature>
<proteinExistence type="inferred from homology"/>
<dbReference type="EC" id="2.5.1.61" evidence="1"/>
<dbReference type="EMBL" id="CP001097">
    <property type="protein sequence ID" value="ACD89972.1"/>
    <property type="molecule type" value="Genomic_DNA"/>
</dbReference>
<dbReference type="RefSeq" id="WP_012465851.1">
    <property type="nucleotide sequence ID" value="NC_010803.1"/>
</dbReference>
<dbReference type="SMR" id="B3EIN1"/>
<dbReference type="STRING" id="290315.Clim_0893"/>
<dbReference type="KEGG" id="cli:Clim_0893"/>
<dbReference type="eggNOG" id="COG0181">
    <property type="taxonomic scope" value="Bacteria"/>
</dbReference>
<dbReference type="HOGENOM" id="CLU_019704_0_2_10"/>
<dbReference type="OrthoDB" id="9810298at2"/>
<dbReference type="UniPathway" id="UPA00251">
    <property type="reaction ID" value="UER00319"/>
</dbReference>
<dbReference type="UniPathway" id="UPA00668"/>
<dbReference type="Proteomes" id="UP000008841">
    <property type="component" value="Chromosome"/>
</dbReference>
<dbReference type="GO" id="GO:0005737">
    <property type="term" value="C:cytoplasm"/>
    <property type="evidence" value="ECO:0007669"/>
    <property type="project" value="TreeGrafter"/>
</dbReference>
<dbReference type="GO" id="GO:0004418">
    <property type="term" value="F:hydroxymethylbilane synthase activity"/>
    <property type="evidence" value="ECO:0007669"/>
    <property type="project" value="UniProtKB-UniRule"/>
</dbReference>
<dbReference type="GO" id="GO:0015995">
    <property type="term" value="P:chlorophyll biosynthetic process"/>
    <property type="evidence" value="ECO:0007669"/>
    <property type="project" value="UniProtKB-UniRule"/>
</dbReference>
<dbReference type="GO" id="GO:0006782">
    <property type="term" value="P:protoporphyrinogen IX biosynthetic process"/>
    <property type="evidence" value="ECO:0007669"/>
    <property type="project" value="UniProtKB-UniRule"/>
</dbReference>
<dbReference type="CDD" id="cd13646">
    <property type="entry name" value="PBP2_EcHMBS_like"/>
    <property type="match status" value="1"/>
</dbReference>
<dbReference type="FunFam" id="3.30.160.40:FF:000002">
    <property type="entry name" value="Porphobilinogen deaminase"/>
    <property type="match status" value="1"/>
</dbReference>
<dbReference type="FunFam" id="3.40.190.10:FF:000004">
    <property type="entry name" value="Porphobilinogen deaminase"/>
    <property type="match status" value="1"/>
</dbReference>
<dbReference type="FunFam" id="3.40.190.10:FF:000005">
    <property type="entry name" value="Porphobilinogen deaminase"/>
    <property type="match status" value="1"/>
</dbReference>
<dbReference type="Gene3D" id="3.40.190.10">
    <property type="entry name" value="Periplasmic binding protein-like II"/>
    <property type="match status" value="2"/>
</dbReference>
<dbReference type="Gene3D" id="3.30.160.40">
    <property type="entry name" value="Porphobilinogen deaminase, C-terminal domain"/>
    <property type="match status" value="1"/>
</dbReference>
<dbReference type="HAMAP" id="MF_00260">
    <property type="entry name" value="Porphobil_deam"/>
    <property type="match status" value="1"/>
</dbReference>
<dbReference type="InterPro" id="IPR000860">
    <property type="entry name" value="HemC"/>
</dbReference>
<dbReference type="InterPro" id="IPR022419">
    <property type="entry name" value="Porphobilin_deaminase_cofac_BS"/>
</dbReference>
<dbReference type="InterPro" id="IPR022417">
    <property type="entry name" value="Porphobilin_deaminase_N"/>
</dbReference>
<dbReference type="InterPro" id="IPR022418">
    <property type="entry name" value="Porphobilinogen_deaminase_C"/>
</dbReference>
<dbReference type="InterPro" id="IPR036803">
    <property type="entry name" value="Porphobilinogen_deaminase_C_sf"/>
</dbReference>
<dbReference type="NCBIfam" id="TIGR00212">
    <property type="entry name" value="hemC"/>
    <property type="match status" value="1"/>
</dbReference>
<dbReference type="PANTHER" id="PTHR11557">
    <property type="entry name" value="PORPHOBILINOGEN DEAMINASE"/>
    <property type="match status" value="1"/>
</dbReference>
<dbReference type="PANTHER" id="PTHR11557:SF0">
    <property type="entry name" value="PORPHOBILINOGEN DEAMINASE"/>
    <property type="match status" value="1"/>
</dbReference>
<dbReference type="Pfam" id="PF01379">
    <property type="entry name" value="Porphobil_deam"/>
    <property type="match status" value="1"/>
</dbReference>
<dbReference type="Pfam" id="PF03900">
    <property type="entry name" value="Porphobil_deamC"/>
    <property type="match status" value="1"/>
</dbReference>
<dbReference type="PIRSF" id="PIRSF001438">
    <property type="entry name" value="4pyrrol_synth_OHMeBilane_synth"/>
    <property type="match status" value="1"/>
</dbReference>
<dbReference type="PRINTS" id="PR00151">
    <property type="entry name" value="PORPHBDMNASE"/>
</dbReference>
<dbReference type="SUPFAM" id="SSF53850">
    <property type="entry name" value="Periplasmic binding protein-like II"/>
    <property type="match status" value="1"/>
</dbReference>
<dbReference type="SUPFAM" id="SSF54782">
    <property type="entry name" value="Porphobilinogen deaminase (hydroxymethylbilane synthase), C-terminal domain"/>
    <property type="match status" value="1"/>
</dbReference>
<dbReference type="PROSITE" id="PS00533">
    <property type="entry name" value="PORPHOBILINOGEN_DEAM"/>
    <property type="match status" value="1"/>
</dbReference>
<accession>B3EIN1</accession>
<sequence>MKKQLIIGTRSSPLALWQAEFTKAELSRHFPELDITLKLVKTTGDVLLDSPLSKIGDMGLFTKDIEKHLIAKEIDLAVHSLKDVPTSTPEGLIITSFTEREDTRDVIISKGGAKLADLPLNAKVATSSLRRMSQLKSLRPDFEICDIRGNLNTRFKKFDEGEFDAMMLAYAGVFRLNFSDRISEILPHEIMLPAVGQGALGIETRVDDEQTREIVRILNHSNTEYCCKAERALLRHLQGGCQIPIGAYASFKNGTLKLLAFVGSVDGTVGINNEITRSGLTSPDQAEEAGIALAEELLKQGADKILSEIRKTR</sequence>
<comment type="function">
    <text evidence="1">Tetrapolymerization of the monopyrrole PBG into the hydroxymethylbilane pre-uroporphyrinogen in several discrete steps.</text>
</comment>
<comment type="catalytic activity">
    <reaction evidence="1">
        <text>4 porphobilinogen + H2O = hydroxymethylbilane + 4 NH4(+)</text>
        <dbReference type="Rhea" id="RHEA:13185"/>
        <dbReference type="ChEBI" id="CHEBI:15377"/>
        <dbReference type="ChEBI" id="CHEBI:28938"/>
        <dbReference type="ChEBI" id="CHEBI:57845"/>
        <dbReference type="ChEBI" id="CHEBI:58126"/>
        <dbReference type="EC" id="2.5.1.61"/>
    </reaction>
</comment>
<comment type="cofactor">
    <cofactor evidence="1">
        <name>dipyrromethane</name>
        <dbReference type="ChEBI" id="CHEBI:60342"/>
    </cofactor>
    <text evidence="1">Binds 1 dipyrromethane group covalently.</text>
</comment>
<comment type="pathway">
    <text evidence="1">Porphyrin-containing compound metabolism; protoporphyrin-IX biosynthesis; coproporphyrinogen-III from 5-aminolevulinate: step 2/4.</text>
</comment>
<comment type="pathway">
    <text evidence="1">Porphyrin-containing compound metabolism; chlorophyll biosynthesis.</text>
</comment>
<comment type="subunit">
    <text evidence="1">Monomer.</text>
</comment>
<comment type="miscellaneous">
    <text evidence="1">The porphobilinogen subunits are added to the dipyrromethane group.</text>
</comment>
<comment type="similarity">
    <text evidence="1">Belongs to the HMBS family.</text>
</comment>
<evidence type="ECO:0000255" key="1">
    <source>
        <dbReference type="HAMAP-Rule" id="MF_00260"/>
    </source>
</evidence>